<comment type="catalytic activity">
    <reaction>
        <text>Preferential cleavage: Arg-|-Xaa, Lys-|-Xaa.</text>
        <dbReference type="EC" id="3.4.21.4"/>
    </reaction>
</comment>
<comment type="subcellular location">
    <subcellularLocation>
        <location evidence="2">Secreted</location>
        <location evidence="2">Extracellular space</location>
    </subcellularLocation>
</comment>
<comment type="similarity">
    <text evidence="3">Belongs to the peptidase S1 family.</text>
</comment>
<evidence type="ECO:0000250" key="1">
    <source>
        <dbReference type="UniProtKB" id="C0HKA2"/>
    </source>
</evidence>
<evidence type="ECO:0000250" key="2">
    <source>
        <dbReference type="UniProtKB" id="P04814"/>
    </source>
</evidence>
<evidence type="ECO:0000255" key="3">
    <source>
        <dbReference type="PROSITE-ProRule" id="PRU00274"/>
    </source>
</evidence>
<evidence type="ECO:0000305" key="4"/>
<organism>
    <name type="scientific">Drosophila erecta</name>
    <name type="common">Fruit fly</name>
    <dbReference type="NCBI Taxonomy" id="7220"/>
    <lineage>
        <taxon>Eukaryota</taxon>
        <taxon>Metazoa</taxon>
        <taxon>Ecdysozoa</taxon>
        <taxon>Arthropoda</taxon>
        <taxon>Hexapoda</taxon>
        <taxon>Insecta</taxon>
        <taxon>Pterygota</taxon>
        <taxon>Neoptera</taxon>
        <taxon>Endopterygota</taxon>
        <taxon>Diptera</taxon>
        <taxon>Brachycera</taxon>
        <taxon>Muscomorpha</taxon>
        <taxon>Ephydroidea</taxon>
        <taxon>Drosophilidae</taxon>
        <taxon>Drosophila</taxon>
        <taxon>Sophophora</taxon>
    </lineage>
</organism>
<keyword id="KW-1015">Disulfide bond</keyword>
<keyword id="KW-0378">Hydrolase</keyword>
<keyword id="KW-0645">Protease</keyword>
<keyword id="KW-0964">Secreted</keyword>
<keyword id="KW-0720">Serine protease</keyword>
<keyword id="KW-0732">Signal</keyword>
<keyword id="KW-0865">Zymogen</keyword>
<dbReference type="EC" id="3.4.21.4" evidence="3"/>
<dbReference type="EMBL" id="U40653">
    <property type="protein sequence ID" value="AAA83243.1"/>
    <property type="molecule type" value="Genomic_DNA"/>
</dbReference>
<dbReference type="SMR" id="C0HKA5"/>
<dbReference type="eggNOG" id="KOG3627">
    <property type="taxonomic scope" value="Eukaryota"/>
</dbReference>
<dbReference type="OrthoDB" id="10059102at2759"/>
<dbReference type="GO" id="GO:0005576">
    <property type="term" value="C:extracellular region"/>
    <property type="evidence" value="ECO:0007669"/>
    <property type="project" value="UniProtKB-SubCell"/>
</dbReference>
<dbReference type="GO" id="GO:0004252">
    <property type="term" value="F:serine-type endopeptidase activity"/>
    <property type="evidence" value="ECO:0007669"/>
    <property type="project" value="UniProtKB-EC"/>
</dbReference>
<dbReference type="GO" id="GO:0006508">
    <property type="term" value="P:proteolysis"/>
    <property type="evidence" value="ECO:0007669"/>
    <property type="project" value="UniProtKB-KW"/>
</dbReference>
<dbReference type="CDD" id="cd00190">
    <property type="entry name" value="Tryp_SPc"/>
    <property type="match status" value="1"/>
</dbReference>
<dbReference type="FunFam" id="2.40.10.10:FF:000077">
    <property type="entry name" value="Predicted protein"/>
    <property type="match status" value="1"/>
</dbReference>
<dbReference type="Gene3D" id="2.40.10.10">
    <property type="entry name" value="Trypsin-like serine proteases"/>
    <property type="match status" value="2"/>
</dbReference>
<dbReference type="InterPro" id="IPR050430">
    <property type="entry name" value="Peptidase_S1"/>
</dbReference>
<dbReference type="InterPro" id="IPR009003">
    <property type="entry name" value="Peptidase_S1_PA"/>
</dbReference>
<dbReference type="InterPro" id="IPR043504">
    <property type="entry name" value="Peptidase_S1_PA_chymotrypsin"/>
</dbReference>
<dbReference type="InterPro" id="IPR001314">
    <property type="entry name" value="Peptidase_S1A"/>
</dbReference>
<dbReference type="InterPro" id="IPR001254">
    <property type="entry name" value="Trypsin_dom"/>
</dbReference>
<dbReference type="InterPro" id="IPR018114">
    <property type="entry name" value="TRYPSIN_HIS"/>
</dbReference>
<dbReference type="InterPro" id="IPR033116">
    <property type="entry name" value="TRYPSIN_SER"/>
</dbReference>
<dbReference type="PANTHER" id="PTHR24276:SF91">
    <property type="entry name" value="AT26814P-RELATED"/>
    <property type="match status" value="1"/>
</dbReference>
<dbReference type="PANTHER" id="PTHR24276">
    <property type="entry name" value="POLYSERASE-RELATED"/>
    <property type="match status" value="1"/>
</dbReference>
<dbReference type="Pfam" id="PF00089">
    <property type="entry name" value="Trypsin"/>
    <property type="match status" value="1"/>
</dbReference>
<dbReference type="PRINTS" id="PR00722">
    <property type="entry name" value="CHYMOTRYPSIN"/>
</dbReference>
<dbReference type="SMART" id="SM00020">
    <property type="entry name" value="Tryp_SPc"/>
    <property type="match status" value="1"/>
</dbReference>
<dbReference type="SUPFAM" id="SSF50494">
    <property type="entry name" value="Trypsin-like serine proteases"/>
    <property type="match status" value="1"/>
</dbReference>
<dbReference type="PROSITE" id="PS50240">
    <property type="entry name" value="TRYPSIN_DOM"/>
    <property type="match status" value="1"/>
</dbReference>
<dbReference type="PROSITE" id="PS00134">
    <property type="entry name" value="TRYPSIN_HIS"/>
    <property type="match status" value="1"/>
</dbReference>
<dbReference type="PROSITE" id="PS00135">
    <property type="entry name" value="TRYPSIN_SER"/>
    <property type="match status" value="1"/>
</dbReference>
<name>TRYDT_DROER</name>
<feature type="signal peptide" evidence="4">
    <location>
        <begin position="1"/>
        <end position="22"/>
    </location>
</feature>
<feature type="propeptide" id="PRO_0000028267" description="Activation peptide">
    <location>
        <begin position="23"/>
        <end position="30"/>
    </location>
</feature>
<feature type="chain" id="PRO_0000028268" description="Trypsin delta">
    <location>
        <begin position="31"/>
        <end position="253"/>
    </location>
</feature>
<feature type="domain" description="Peptidase S1" evidence="3">
    <location>
        <begin position="31"/>
        <end position="253"/>
    </location>
</feature>
<feature type="active site" description="Charge relay system" evidence="3">
    <location>
        <position position="71"/>
    </location>
</feature>
<feature type="active site" description="Charge relay system" evidence="3">
    <location>
        <position position="116"/>
    </location>
</feature>
<feature type="active site" description="Charge relay system" evidence="3">
    <location>
        <position position="210"/>
    </location>
</feature>
<feature type="site" description="Required for specificity" evidence="4">
    <location>
        <position position="204"/>
    </location>
</feature>
<feature type="disulfide bond" evidence="3">
    <location>
        <begin position="56"/>
        <end position="72"/>
    </location>
</feature>
<feature type="disulfide bond" evidence="3">
    <location>
        <begin position="180"/>
        <end position="197"/>
    </location>
</feature>
<feature type="disulfide bond" evidence="3">
    <location>
        <begin position="206"/>
        <end position="230"/>
    </location>
</feature>
<accession>C0HKA5</accession>
<accession>P54626</accession>
<proteinExistence type="inferred from homology"/>
<reference key="1">
    <citation type="journal article" date="1999" name="Mol. Biol. Evol.">
        <title>Concerted evolution within a trypsin gene cluster in Drosophila.</title>
        <authorList>
            <person name="Wang S."/>
            <person name="Magoulas C."/>
            <person name="Hickey D.A."/>
        </authorList>
    </citation>
    <scope>NUCLEOTIDE SEQUENCE [GENOMIC DNA]</scope>
</reference>
<gene>
    <name evidence="1" type="primary">deltaTry</name>
</gene>
<protein>
    <recommendedName>
        <fullName evidence="1">Trypsin delta</fullName>
        <ecNumber evidence="3">3.4.21.4</ecNumber>
    </recommendedName>
</protein>
<sequence length="253" mass="25965">MLKFVILLSAVACALGGTIPEGLLPQLDGRIVGGTATTISSFPWQISLQRSGSHSCGGSIYTDRVIVTAAHCLQSVSTSSLQIRAGSSYWNSGGVTVKVSSFKNHEGYSARTMVNDIAVIRLSSSLSFSSTIKSISLASSNPPNGAAASVSGWGTQSSGSNSIPSQLQYVNVNIVSQSRCASSTYGYGSDIRDTMICAAASGKDACQGDSGGPLVSGGVLVGVVSWGQGCAYSNYPGVYASVADLRAWVVRNA</sequence>